<sequence>MSEFLTPERTVYDSGVQFLRPKSLDEFIGQENVKKKLSLALEAAKMRGEVLDHVLLAGPPGLGKTTLAHIIASELQTNIHVTSGPVLVKQGDMAAILTSLERGDVLFIDEIHRLNKAVEELLYSAIEDFQIDIMIGKGPSAKSIRIDIQPFTLVGATTRSGLLSSPLRSRFGIILELDFYTVKELKEIIKRAASLMDVEIEDAAAEMIAKRSRGTPRIAIRLTKRVRDMLTVVKADRINTDIVLKTMEVLNIDDEGLDEFDRKILKTIIEIYRGGPVGLNALAASLGVEADTLSEVYEPYLLQAGFLARTPRGRIVTEKAYKHLKYEVPENRLF</sequence>
<protein>
    <recommendedName>
        <fullName evidence="1">Holliday junction branch migration complex subunit RuvB</fullName>
        <ecNumber evidence="1 3">3.6.4.-</ecNumber>
    </recommendedName>
</protein>
<accession>Q56313</accession>
<comment type="function">
    <text evidence="1">The RuvA-RuvB-RuvC complex processes Holliday junction (HJ) DNA during genetic recombination and DNA repair, while the RuvA-RuvB complex plays an important role in the rescue of blocked DNA replication forks via replication fork reversal (RFR). RuvA specifically binds to HJ cruciform DNA, conferring on it an open structure. The RuvB hexamer acts as an ATP-dependent pump, pulling dsDNA into and through the RuvAB complex. RuvB forms 2 homohexamers on either side of HJ DNA bound by 1 or 2 RuvA tetramers; 4 subunits per hexamer contact DNA at a time. Coordinated motions by a converter formed by DNA-disengaged RuvB subunits stimulates ATP hydrolysis and nucleotide exchange. Immobilization of the converter enables RuvB to convert the ATP-contained energy into a lever motion, pulling 2 nucleotides of DNA out of the RuvA tetramer per ATP hydrolyzed, thus driving DNA branch migration. The RuvB motors rotate together with the DNA substrate, which together with the progressing nucleotide cycle form the mechanistic basis for DNA recombination by continuous HJ branch migration. Branch migration allows RuvC to scan DNA until it finds its consensus sequence, where it cleaves and resolves cruciform DNA.</text>
</comment>
<comment type="function">
    <text evidence="2 3">Promotes Holliday junction (HJ) branch migration in conjunction with RuvA. Subunits can be free, ADP- or ATP-bound; nucleotide binding changes during the reaction cycle (PubMed:11478862). Has a DNA-dependent ATPase activity; dsDNA and supercoiled DNA but not ssDNA stimulate activity (PubMed:11478862, PubMed:8626340).</text>
</comment>
<comment type="catalytic activity">
    <reaction evidence="1 2 3">
        <text>ATP + H2O = ADP + phosphate + H(+)</text>
        <dbReference type="Rhea" id="RHEA:13065"/>
        <dbReference type="ChEBI" id="CHEBI:15377"/>
        <dbReference type="ChEBI" id="CHEBI:15378"/>
        <dbReference type="ChEBI" id="CHEBI:30616"/>
        <dbReference type="ChEBI" id="CHEBI:43474"/>
        <dbReference type="ChEBI" id="CHEBI:456216"/>
    </reaction>
</comment>
<comment type="biophysicochemical properties">
    <temperatureDependence>
        <text evidence="3">Optimum temperature for ATPase activity is 80 degrees Celsius.</text>
    </temperatureDependence>
</comment>
<comment type="subunit">
    <text evidence="1 2">Homohexamer (PubMed:11478862). Forms an RuvA(8)-RuvB(12)-Holliday junction (HJ) complex. HJ DNA is sandwiched between 2 RuvA tetramers; dsDNA enters through RuvA and exits via RuvB. An RuvB hexamer assembles on each DNA strand where it exits the tetramer. Each RuvB hexamer is contacted by two RuvA subunits (via domain III) on 2 adjacent RuvB subunits; this complex drives branch migration. In the full resolvosome a probable DNA-RuvA(4)-RuvB(12)-RuvC(2) complex forms which resolves the HJ.</text>
</comment>
<comment type="subcellular location">
    <subcellularLocation>
        <location evidence="1">Cytoplasm</location>
    </subcellularLocation>
</comment>
<comment type="domain">
    <text evidence="1 2">Has 3 domains, the large (RuvB-L) and small ATPase (RuvB-S) domains and the C-terminal head (RuvB-H) domain. The head domain binds DNA, while the ATPase domains jointly bind ATP, ADP or are empty depending on the state of the subunit in the translocation cycle. During a single DNA translocation step the structure of each domain remains the same, but their relative positions change.</text>
</comment>
<comment type="similarity">
    <text evidence="1">Belongs to the RuvB family.</text>
</comment>
<reference key="1">
    <citation type="journal article" date="1996" name="J. Bacteriol.">
        <title>Cloning, sequencing, and expression of ruvB and characterization of RuvB proteins from two distantly related thermophilic eubacteria.</title>
        <authorList>
            <person name="Tong J."/>
            <person name="Wetmur J.G."/>
        </authorList>
    </citation>
    <scope>NUCLEOTIDE SEQUENCE [GENOMIC DNA]</scope>
    <scope>FUNCTION</scope>
    <scope>CATALYTIC ACTIVITY</scope>
    <scope>BIOPHYSICOCHEMICAL PROPERTIES</scope>
</reference>
<reference key="2">
    <citation type="journal article" date="1999" name="Nature">
        <title>Evidence for lateral gene transfer between Archaea and Bacteria from genome sequence of Thermotoga maritima.</title>
        <authorList>
            <person name="Nelson K.E."/>
            <person name="Clayton R.A."/>
            <person name="Gill S.R."/>
            <person name="Gwinn M.L."/>
            <person name="Dodson R.J."/>
            <person name="Haft D.H."/>
            <person name="Hickey E.K."/>
            <person name="Peterson J.D."/>
            <person name="Nelson W.C."/>
            <person name="Ketchum K.A."/>
            <person name="McDonald L.A."/>
            <person name="Utterback T.R."/>
            <person name="Malek J.A."/>
            <person name="Linher K.D."/>
            <person name="Garrett M.M."/>
            <person name="Stewart A.M."/>
            <person name="Cotton M.D."/>
            <person name="Pratt M.S."/>
            <person name="Phillips C.A."/>
            <person name="Richardson D.L."/>
            <person name="Heidelberg J.F."/>
            <person name="Sutton G.G."/>
            <person name="Fleischmann R.D."/>
            <person name="Eisen J.A."/>
            <person name="White O."/>
            <person name="Salzberg S.L."/>
            <person name="Smith H.O."/>
            <person name="Venter J.C."/>
            <person name="Fraser C.M."/>
        </authorList>
    </citation>
    <scope>NUCLEOTIDE SEQUENCE [LARGE SCALE GENOMIC DNA]</scope>
    <source>
        <strain>ATCC 43589 / DSM 3109 / JCM 10099 / NBRC 100826 / MSB8</strain>
    </source>
</reference>
<reference evidence="5 6 7 8 9 10" key="3">
    <citation type="journal article" date="2001" name="J. Mol. Biol.">
        <title>Structure and mechanism of the RuvB Holliday junction branch migration motor.</title>
        <authorList>
            <person name="Putnam C.D."/>
            <person name="Clancy S.B."/>
            <person name="Tsuruta H."/>
            <person name="Gonzalez S."/>
            <person name="Wetmur J.G."/>
            <person name="Tainer J.A."/>
        </authorList>
    </citation>
    <scope>X-RAY CRYSTALLOGRAPHY (1.60 ANGSTROMS) IN COMPLEX WITH ADP OR ATP</scope>
    <scope>FUNCTION</scope>
    <scope>CATALYTIC ACTIVITY</scope>
    <scope>SUBUNIT</scope>
    <scope>MUTAGENESIS OF ALA-156; 157-THR-THR-158; THR-158; ARG-170; PRO-216 AND ARG-217</scope>
</reference>
<feature type="chain" id="PRO_0000165617" description="Holliday junction branch migration complex subunit RuvB">
    <location>
        <begin position="1"/>
        <end position="334"/>
    </location>
</feature>
<feature type="region of interest" description="Large ATPase domain (RuvB-L)" evidence="1 2">
    <location>
        <begin position="1"/>
        <end position="181"/>
    </location>
</feature>
<feature type="region of interest" description="Small ATPAse domain (RuvB-S)" evidence="1 2">
    <location>
        <begin position="182"/>
        <end position="255"/>
    </location>
</feature>
<feature type="region of interest" description="Head domain (RuvB-H)" evidence="1 2">
    <location>
        <begin position="256"/>
        <end position="334"/>
    </location>
</feature>
<feature type="binding site" evidence="1 8">
    <location>
        <position position="19"/>
    </location>
    <ligand>
        <name>ADP</name>
        <dbReference type="ChEBI" id="CHEBI:456216"/>
    </ligand>
</feature>
<feature type="binding site" evidence="1 7 8 10">
    <location>
        <position position="20"/>
    </location>
    <ligand>
        <name>ADP</name>
        <dbReference type="ChEBI" id="CHEBI:456216"/>
    </ligand>
</feature>
<feature type="binding site" evidence="10">
    <location>
        <position position="26"/>
    </location>
    <ligand>
        <name>ATP</name>
        <dbReference type="ChEBI" id="CHEBI:30616"/>
    </ligand>
</feature>
<feature type="binding site" evidence="2 5 6 7 8 9">
    <location>
        <position position="27"/>
    </location>
    <ligand>
        <name>ADP</name>
        <dbReference type="ChEBI" id="CHEBI:456216"/>
    </ligand>
</feature>
<feature type="binding site" evidence="2 10">
    <location>
        <position position="27"/>
    </location>
    <ligand>
        <name>ATP</name>
        <dbReference type="ChEBI" id="CHEBI:30616"/>
    </ligand>
</feature>
<feature type="binding site" evidence="2 5 6 7 8 9">
    <location>
        <position position="28"/>
    </location>
    <ligand>
        <name>ADP</name>
        <dbReference type="ChEBI" id="CHEBI:456216"/>
    </ligand>
</feature>
<feature type="binding site" evidence="2 10">
    <location>
        <position position="28"/>
    </location>
    <ligand>
        <name>ATP</name>
        <dbReference type="ChEBI" id="CHEBI:30616"/>
    </ligand>
</feature>
<feature type="binding site" evidence="1 5 6 7 8 9 10">
    <location>
        <position position="61"/>
    </location>
    <ligand>
        <name>ADP</name>
        <dbReference type="ChEBI" id="CHEBI:456216"/>
    </ligand>
</feature>
<feature type="binding site" evidence="2 5 6 7 8 9">
    <location>
        <position position="62"/>
    </location>
    <ligand>
        <name>ADP</name>
        <dbReference type="ChEBI" id="CHEBI:456216"/>
    </ligand>
</feature>
<feature type="binding site" evidence="2 10">
    <location>
        <position position="62"/>
    </location>
    <ligand>
        <name>ATP</name>
        <dbReference type="ChEBI" id="CHEBI:30616"/>
    </ligand>
</feature>
<feature type="binding site" evidence="5 6 7 8 9">
    <location>
        <position position="63"/>
    </location>
    <ligand>
        <name>ADP</name>
        <dbReference type="ChEBI" id="CHEBI:456216"/>
    </ligand>
</feature>
<feature type="binding site" evidence="10">
    <location>
        <position position="63"/>
    </location>
    <ligand>
        <name>ATP</name>
        <dbReference type="ChEBI" id="CHEBI:30616"/>
    </ligand>
</feature>
<feature type="binding site" evidence="1 2 5 6 8 9 10">
    <location>
        <position position="64"/>
    </location>
    <ligand>
        <name>ADP</name>
        <dbReference type="ChEBI" id="CHEBI:456216"/>
    </ligand>
</feature>
<feature type="binding site" evidence="1 2 5 6 7 8 9 10">
    <location>
        <position position="65"/>
    </location>
    <ligand>
        <name>ADP</name>
        <dbReference type="ChEBI" id="CHEBI:456216"/>
    </ligand>
</feature>
<feature type="binding site" evidence="1 5 6 7 8 9 10">
    <location>
        <position position="66"/>
    </location>
    <ligand>
        <name>ADP</name>
        <dbReference type="ChEBI" id="CHEBI:456216"/>
    </ligand>
</feature>
<feature type="binding site" evidence="1">
    <location>
        <begin position="127"/>
        <end position="129"/>
    </location>
    <ligand>
        <name>ATP</name>
        <dbReference type="ChEBI" id="CHEBI:30616"/>
    </ligand>
</feature>
<feature type="binding site" evidence="1">
    <location>
        <position position="170"/>
    </location>
    <ligand>
        <name>ATP</name>
        <dbReference type="ChEBI" id="CHEBI:30616"/>
    </ligand>
</feature>
<feature type="binding site" evidence="1 2 5 6 7 8 9 10">
    <location>
        <position position="180"/>
    </location>
    <ligand>
        <name>ADP</name>
        <dbReference type="ChEBI" id="CHEBI:456216"/>
    </ligand>
</feature>
<feature type="binding site" evidence="2">
    <location>
        <position position="216"/>
    </location>
    <ligand>
        <name>ADP</name>
        <dbReference type="ChEBI" id="CHEBI:456216"/>
    </ligand>
</feature>
<feature type="binding site" evidence="2">
    <location>
        <position position="216"/>
    </location>
    <ligand>
        <name>ATP</name>
        <dbReference type="ChEBI" id="CHEBI:30616"/>
    </ligand>
</feature>
<feature type="binding site" evidence="1 2 5 6 8 10">
    <location>
        <position position="217"/>
    </location>
    <ligand>
        <name>ADP</name>
        <dbReference type="ChEBI" id="CHEBI:456216"/>
    </ligand>
</feature>
<feature type="binding site" evidence="1">
    <location>
        <position position="309"/>
    </location>
    <ligand>
        <name>DNA</name>
        <dbReference type="ChEBI" id="CHEBI:16991"/>
    </ligand>
</feature>
<feature type="binding site" evidence="1">
    <location>
        <position position="314"/>
    </location>
    <ligand>
        <name>DNA</name>
        <dbReference type="ChEBI" id="CHEBI:16991"/>
    </ligand>
</feature>
<feature type="mutagenesis site" description="38% DNA-dependent ATPase activity." evidence="2">
    <original>A</original>
    <variation>C</variation>
    <location>
        <position position="156"/>
    </location>
</feature>
<feature type="mutagenesis site" description="32% DNA-dependent ATPase activity, allows branch migration." evidence="2">
    <original>A</original>
    <variation>S</variation>
    <location>
        <position position="156"/>
    </location>
</feature>
<feature type="mutagenesis site" description="5% DNA-dependent ATPase activity, no branch migration." evidence="2">
    <original>TT</original>
    <variation>VV</variation>
    <location>
        <begin position="157"/>
        <end position="158"/>
    </location>
</feature>
<feature type="mutagenesis site" description="5% DNA-dependent ATPase activity." evidence="2">
    <original>T</original>
    <variation>V</variation>
    <location>
        <position position="158"/>
    </location>
</feature>
<feature type="mutagenesis site" description="3-4% DNA-dependent ATPase activity, nobranch migration." evidence="2">
    <original>R</original>
    <variation>A</variation>
    <variation>R</variation>
    <location>
        <position position="170"/>
    </location>
</feature>
<feature type="mutagenesis site" description="11% DNA-dependent ATPase activity, allows branch migration." evidence="2">
    <original>P</original>
    <variation>G</variation>
    <location>
        <position position="216"/>
    </location>
</feature>
<feature type="mutagenesis site" description="43% DNA-dependent ATPase activity, allows branch migration." evidence="2">
    <original>R</original>
    <variation>A</variation>
    <location>
        <position position="217"/>
    </location>
</feature>
<feature type="mutagenesis site" description="5% DNA-dependent ATPase activity, no branch migration." evidence="2">
    <original>R</original>
    <variation>K</variation>
    <location>
        <position position="217"/>
    </location>
</feature>
<feature type="helix" evidence="11">
    <location>
        <begin position="24"/>
        <end position="26"/>
    </location>
</feature>
<feature type="helix" evidence="11">
    <location>
        <begin position="31"/>
        <end position="47"/>
    </location>
</feature>
<feature type="strand" evidence="11">
    <location>
        <begin position="54"/>
        <end position="59"/>
    </location>
</feature>
<feature type="helix" evidence="11">
    <location>
        <begin position="64"/>
        <end position="75"/>
    </location>
</feature>
<feature type="strand" evidence="11">
    <location>
        <begin position="79"/>
        <end position="83"/>
    </location>
</feature>
<feature type="turn" evidence="11">
    <location>
        <begin position="84"/>
        <end position="86"/>
    </location>
</feature>
<feature type="helix" evidence="11">
    <location>
        <begin position="90"/>
        <end position="99"/>
    </location>
</feature>
<feature type="strand" evidence="11">
    <location>
        <begin position="105"/>
        <end position="109"/>
    </location>
</feature>
<feature type="helix" evidence="11">
    <location>
        <begin position="111"/>
        <end position="113"/>
    </location>
</feature>
<feature type="helix" evidence="11">
    <location>
        <begin position="116"/>
        <end position="127"/>
    </location>
</feature>
<feature type="strand" evidence="11">
    <location>
        <begin position="152"/>
        <end position="158"/>
    </location>
</feature>
<feature type="helix" evidence="11">
    <location>
        <begin position="160"/>
        <end position="162"/>
    </location>
</feature>
<feature type="helix" evidence="11">
    <location>
        <begin position="165"/>
        <end position="168"/>
    </location>
</feature>
<feature type="strand" evidence="11">
    <location>
        <begin position="172"/>
        <end position="176"/>
    </location>
</feature>
<feature type="helix" evidence="11">
    <location>
        <begin position="182"/>
        <end position="195"/>
    </location>
</feature>
<feature type="helix" evidence="11">
    <location>
        <begin position="202"/>
        <end position="210"/>
    </location>
</feature>
<feature type="helix" evidence="11">
    <location>
        <begin position="216"/>
        <end position="233"/>
    </location>
</feature>
<feature type="strand" evidence="11">
    <location>
        <begin position="236"/>
        <end position="238"/>
    </location>
</feature>
<feature type="helix" evidence="11">
    <location>
        <begin position="240"/>
        <end position="250"/>
    </location>
</feature>
<feature type="helix" evidence="11">
    <location>
        <begin position="259"/>
        <end position="271"/>
    </location>
</feature>
<feature type="helix" evidence="11">
    <location>
        <begin position="279"/>
        <end position="286"/>
    </location>
</feature>
<feature type="helix" evidence="11">
    <location>
        <begin position="290"/>
        <end position="296"/>
    </location>
</feature>
<feature type="helix" evidence="11">
    <location>
        <begin position="298"/>
        <end position="303"/>
    </location>
</feature>
<feature type="strand" evidence="11">
    <location>
        <begin position="306"/>
        <end position="310"/>
    </location>
</feature>
<feature type="strand" evidence="11">
    <location>
        <begin position="313"/>
        <end position="316"/>
    </location>
</feature>
<feature type="helix" evidence="11">
    <location>
        <begin position="318"/>
        <end position="323"/>
    </location>
</feature>
<proteinExistence type="evidence at protein level"/>
<evidence type="ECO:0000255" key="1">
    <source>
        <dbReference type="HAMAP-Rule" id="MF_00016"/>
    </source>
</evidence>
<evidence type="ECO:0000269" key="2">
    <source>
    </source>
</evidence>
<evidence type="ECO:0000269" key="3">
    <source>
    </source>
</evidence>
<evidence type="ECO:0000303" key="4">
    <source>
    </source>
</evidence>
<evidence type="ECO:0007744" key="5">
    <source>
        <dbReference type="PDB" id="1IN4"/>
    </source>
</evidence>
<evidence type="ECO:0007744" key="6">
    <source>
        <dbReference type="PDB" id="1IN5"/>
    </source>
</evidence>
<evidence type="ECO:0007744" key="7">
    <source>
        <dbReference type="PDB" id="1IN6"/>
    </source>
</evidence>
<evidence type="ECO:0007744" key="8">
    <source>
        <dbReference type="PDB" id="1IN7"/>
    </source>
</evidence>
<evidence type="ECO:0007744" key="9">
    <source>
        <dbReference type="PDB" id="1IN8"/>
    </source>
</evidence>
<evidence type="ECO:0007744" key="10">
    <source>
        <dbReference type="PDB" id="1J7K"/>
    </source>
</evidence>
<evidence type="ECO:0007829" key="11">
    <source>
        <dbReference type="PDB" id="1IN4"/>
    </source>
</evidence>
<name>RUVB_THEMA</name>
<gene>
    <name evidence="1 4" type="primary">ruvB</name>
    <name type="ordered locus">TM_1730</name>
</gene>
<keyword id="KW-0002">3D-structure</keyword>
<keyword id="KW-0067">ATP-binding</keyword>
<keyword id="KW-0963">Cytoplasm</keyword>
<keyword id="KW-0227">DNA damage</keyword>
<keyword id="KW-0233">DNA recombination</keyword>
<keyword id="KW-0234">DNA repair</keyword>
<keyword id="KW-0238">DNA-binding</keyword>
<keyword id="KW-0378">Hydrolase</keyword>
<keyword id="KW-0547">Nucleotide-binding</keyword>
<keyword id="KW-1185">Reference proteome</keyword>
<dbReference type="EC" id="3.6.4.-" evidence="1 3"/>
<dbReference type="EMBL" id="U38840">
    <property type="protein sequence ID" value="AAB03727.1"/>
    <property type="molecule type" value="Genomic_DNA"/>
</dbReference>
<dbReference type="EMBL" id="AE000512">
    <property type="protein sequence ID" value="AAD36795.1"/>
    <property type="molecule type" value="Genomic_DNA"/>
</dbReference>
<dbReference type="PIR" id="A72217">
    <property type="entry name" value="A72217"/>
</dbReference>
<dbReference type="RefSeq" id="NP_229528.1">
    <property type="nucleotide sequence ID" value="NC_000853.1"/>
</dbReference>
<dbReference type="RefSeq" id="WP_004082245.1">
    <property type="nucleotide sequence ID" value="NC_000853.1"/>
</dbReference>
<dbReference type="PDB" id="1IN4">
    <property type="method" value="X-ray"/>
    <property type="resolution" value="1.60 A"/>
    <property type="chains" value="A=1-334"/>
</dbReference>
<dbReference type="PDB" id="1IN5">
    <property type="method" value="X-ray"/>
    <property type="resolution" value="2.00 A"/>
    <property type="chains" value="A=1-334"/>
</dbReference>
<dbReference type="PDB" id="1IN6">
    <property type="method" value="X-ray"/>
    <property type="resolution" value="1.80 A"/>
    <property type="chains" value="A=1-334"/>
</dbReference>
<dbReference type="PDB" id="1IN7">
    <property type="method" value="X-ray"/>
    <property type="resolution" value="1.90 A"/>
    <property type="chains" value="A=1-334"/>
</dbReference>
<dbReference type="PDB" id="1IN8">
    <property type="method" value="X-ray"/>
    <property type="resolution" value="1.90 A"/>
    <property type="chains" value="A=1-334"/>
</dbReference>
<dbReference type="PDB" id="1J7K">
    <property type="method" value="X-ray"/>
    <property type="resolution" value="1.80 A"/>
    <property type="chains" value="A=1-334"/>
</dbReference>
<dbReference type="PDBsum" id="1IN4"/>
<dbReference type="PDBsum" id="1IN5"/>
<dbReference type="PDBsum" id="1IN6"/>
<dbReference type="PDBsum" id="1IN7"/>
<dbReference type="PDBsum" id="1IN8"/>
<dbReference type="PDBsum" id="1J7K"/>
<dbReference type="SMR" id="Q56313"/>
<dbReference type="FunCoup" id="Q56313">
    <property type="interactions" value="326"/>
</dbReference>
<dbReference type="STRING" id="243274.TM_1730"/>
<dbReference type="DrugBank" id="DB02210">
    <property type="generic name" value="Hexane-1,6-Diol"/>
</dbReference>
<dbReference type="PaxDb" id="243274-THEMA_05585"/>
<dbReference type="EnsemblBacteria" id="AAD36795">
    <property type="protein sequence ID" value="AAD36795"/>
    <property type="gene ID" value="TM_1730"/>
</dbReference>
<dbReference type="KEGG" id="tma:TM1730"/>
<dbReference type="KEGG" id="tmi:THEMA_05585"/>
<dbReference type="KEGG" id="tmm:Tmari_1738"/>
<dbReference type="KEGG" id="tmw:THMA_1772"/>
<dbReference type="eggNOG" id="COG2255">
    <property type="taxonomic scope" value="Bacteria"/>
</dbReference>
<dbReference type="InParanoid" id="Q56313"/>
<dbReference type="OrthoDB" id="9804478at2"/>
<dbReference type="EvolutionaryTrace" id="Q56313"/>
<dbReference type="Proteomes" id="UP000008183">
    <property type="component" value="Chromosome"/>
</dbReference>
<dbReference type="GO" id="GO:0005737">
    <property type="term" value="C:cytoplasm"/>
    <property type="evidence" value="ECO:0007669"/>
    <property type="project" value="UniProtKB-SubCell"/>
</dbReference>
<dbReference type="GO" id="GO:0048476">
    <property type="term" value="C:Holliday junction resolvase complex"/>
    <property type="evidence" value="ECO:0007669"/>
    <property type="project" value="UniProtKB-UniRule"/>
</dbReference>
<dbReference type="GO" id="GO:0005524">
    <property type="term" value="F:ATP binding"/>
    <property type="evidence" value="ECO:0007669"/>
    <property type="project" value="UniProtKB-UniRule"/>
</dbReference>
<dbReference type="GO" id="GO:0016887">
    <property type="term" value="F:ATP hydrolysis activity"/>
    <property type="evidence" value="ECO:0007669"/>
    <property type="project" value="InterPro"/>
</dbReference>
<dbReference type="GO" id="GO:0000400">
    <property type="term" value="F:four-way junction DNA binding"/>
    <property type="evidence" value="ECO:0007669"/>
    <property type="project" value="UniProtKB-UniRule"/>
</dbReference>
<dbReference type="GO" id="GO:0009378">
    <property type="term" value="F:four-way junction helicase activity"/>
    <property type="evidence" value="ECO:0007669"/>
    <property type="project" value="InterPro"/>
</dbReference>
<dbReference type="GO" id="GO:0006310">
    <property type="term" value="P:DNA recombination"/>
    <property type="evidence" value="ECO:0007669"/>
    <property type="project" value="UniProtKB-UniRule"/>
</dbReference>
<dbReference type="GO" id="GO:0006281">
    <property type="term" value="P:DNA repair"/>
    <property type="evidence" value="ECO:0007669"/>
    <property type="project" value="UniProtKB-UniRule"/>
</dbReference>
<dbReference type="CDD" id="cd00009">
    <property type="entry name" value="AAA"/>
    <property type="match status" value="1"/>
</dbReference>
<dbReference type="Gene3D" id="1.10.8.60">
    <property type="match status" value="1"/>
</dbReference>
<dbReference type="Gene3D" id="3.40.50.300">
    <property type="entry name" value="P-loop containing nucleotide triphosphate hydrolases"/>
    <property type="match status" value="1"/>
</dbReference>
<dbReference type="Gene3D" id="1.10.10.10">
    <property type="entry name" value="Winged helix-like DNA-binding domain superfamily/Winged helix DNA-binding domain"/>
    <property type="match status" value="1"/>
</dbReference>
<dbReference type="HAMAP" id="MF_00016">
    <property type="entry name" value="DNA_HJ_migration_RuvB"/>
    <property type="match status" value="1"/>
</dbReference>
<dbReference type="InterPro" id="IPR003593">
    <property type="entry name" value="AAA+_ATPase"/>
</dbReference>
<dbReference type="InterPro" id="IPR041445">
    <property type="entry name" value="AAA_lid_4"/>
</dbReference>
<dbReference type="InterPro" id="IPR004605">
    <property type="entry name" value="DNA_helicase_Holl-junc_RuvB"/>
</dbReference>
<dbReference type="InterPro" id="IPR027417">
    <property type="entry name" value="P-loop_NTPase"/>
</dbReference>
<dbReference type="InterPro" id="IPR008824">
    <property type="entry name" value="RuvB-like_N"/>
</dbReference>
<dbReference type="InterPro" id="IPR008823">
    <property type="entry name" value="RuvB_C"/>
</dbReference>
<dbReference type="InterPro" id="IPR036388">
    <property type="entry name" value="WH-like_DNA-bd_sf"/>
</dbReference>
<dbReference type="InterPro" id="IPR036390">
    <property type="entry name" value="WH_DNA-bd_sf"/>
</dbReference>
<dbReference type="NCBIfam" id="NF000868">
    <property type="entry name" value="PRK00080.1"/>
    <property type="match status" value="1"/>
</dbReference>
<dbReference type="NCBIfam" id="TIGR00635">
    <property type="entry name" value="ruvB"/>
    <property type="match status" value="1"/>
</dbReference>
<dbReference type="PANTHER" id="PTHR42848">
    <property type="match status" value="1"/>
</dbReference>
<dbReference type="PANTHER" id="PTHR42848:SF1">
    <property type="entry name" value="HOLLIDAY JUNCTION BRANCH MIGRATION COMPLEX SUBUNIT RUVB"/>
    <property type="match status" value="1"/>
</dbReference>
<dbReference type="Pfam" id="PF17864">
    <property type="entry name" value="AAA_lid_4"/>
    <property type="match status" value="1"/>
</dbReference>
<dbReference type="Pfam" id="PF05491">
    <property type="entry name" value="RuvB_C"/>
    <property type="match status" value="1"/>
</dbReference>
<dbReference type="Pfam" id="PF05496">
    <property type="entry name" value="RuvB_N"/>
    <property type="match status" value="1"/>
</dbReference>
<dbReference type="SMART" id="SM00382">
    <property type="entry name" value="AAA"/>
    <property type="match status" value="1"/>
</dbReference>
<dbReference type="SUPFAM" id="SSF52540">
    <property type="entry name" value="P-loop containing nucleoside triphosphate hydrolases"/>
    <property type="match status" value="1"/>
</dbReference>
<dbReference type="SUPFAM" id="SSF46785">
    <property type="entry name" value="Winged helix' DNA-binding domain"/>
    <property type="match status" value="1"/>
</dbReference>
<organism>
    <name type="scientific">Thermotoga maritima (strain ATCC 43589 / DSM 3109 / JCM 10099 / NBRC 100826 / MSB8)</name>
    <dbReference type="NCBI Taxonomy" id="243274"/>
    <lineage>
        <taxon>Bacteria</taxon>
        <taxon>Thermotogati</taxon>
        <taxon>Thermotogota</taxon>
        <taxon>Thermotogae</taxon>
        <taxon>Thermotogales</taxon>
        <taxon>Thermotogaceae</taxon>
        <taxon>Thermotoga</taxon>
    </lineage>
</organism>